<sequence>MFTTALAQRENTQLGELPLDLFAAIQSLKKELNAVILAHYYQEPDIQDIADFIGDSLQLARAAEKTNADVIVFAGVHFMAETAKILNPDKLVLLPDLNAGCSLADSCPPEAFAAFKAAHPDHLVVSYINCSADIKAMSDIICTSSNAVKIVQQIPKEQPIIFAPDRNLGRYVMEQTGRDLVLWQGSCVVHETFSEKKIVQLKIAHPEAEAIAHPECESSVLRHASFIGSTAALLKYCQNSPTKEFIVATEPGIIHQMQKLAPDKHFIPAPPMNNCACNECPFMRLNTLEKLYWAMKNRTPEITMLEDIRLAALRPMQRMLEMSV</sequence>
<accession>B2IYC1</accession>
<comment type="function">
    <text evidence="1">Catalyzes the condensation of iminoaspartate with dihydroxyacetone phosphate to form quinolinate.</text>
</comment>
<comment type="catalytic activity">
    <reaction evidence="1">
        <text>iminosuccinate + dihydroxyacetone phosphate = quinolinate + phosphate + 2 H2O + H(+)</text>
        <dbReference type="Rhea" id="RHEA:25888"/>
        <dbReference type="ChEBI" id="CHEBI:15377"/>
        <dbReference type="ChEBI" id="CHEBI:15378"/>
        <dbReference type="ChEBI" id="CHEBI:29959"/>
        <dbReference type="ChEBI" id="CHEBI:43474"/>
        <dbReference type="ChEBI" id="CHEBI:57642"/>
        <dbReference type="ChEBI" id="CHEBI:77875"/>
        <dbReference type="EC" id="2.5.1.72"/>
    </reaction>
    <physiologicalReaction direction="left-to-right" evidence="1">
        <dbReference type="Rhea" id="RHEA:25889"/>
    </physiologicalReaction>
</comment>
<comment type="cofactor">
    <cofactor evidence="1">
        <name>[4Fe-4S] cluster</name>
        <dbReference type="ChEBI" id="CHEBI:49883"/>
    </cofactor>
    <text evidence="1">Binds 1 [4Fe-4S] cluster per subunit.</text>
</comment>
<comment type="pathway">
    <text evidence="1">Cofactor biosynthesis; NAD(+) biosynthesis; quinolinate from iminoaspartate: step 1/1.</text>
</comment>
<comment type="subcellular location">
    <subcellularLocation>
        <location evidence="1">Cytoplasm</location>
    </subcellularLocation>
</comment>
<comment type="similarity">
    <text evidence="1">Belongs to the quinolinate synthase family. Type 2 subfamily.</text>
</comment>
<keyword id="KW-0004">4Fe-4S</keyword>
<keyword id="KW-0963">Cytoplasm</keyword>
<keyword id="KW-0408">Iron</keyword>
<keyword id="KW-0411">Iron-sulfur</keyword>
<keyword id="KW-0479">Metal-binding</keyword>
<keyword id="KW-0662">Pyridine nucleotide biosynthesis</keyword>
<keyword id="KW-1185">Reference proteome</keyword>
<keyword id="KW-0808">Transferase</keyword>
<name>NADA_NOSP7</name>
<dbReference type="EC" id="2.5.1.72" evidence="1"/>
<dbReference type="EMBL" id="CP001037">
    <property type="protein sequence ID" value="ACC84720.1"/>
    <property type="molecule type" value="Genomic_DNA"/>
</dbReference>
<dbReference type="RefSeq" id="WP_012412656.1">
    <property type="nucleotide sequence ID" value="NC_010628.1"/>
</dbReference>
<dbReference type="SMR" id="B2IYC1"/>
<dbReference type="STRING" id="63737.Npun_R6452"/>
<dbReference type="EnsemblBacteria" id="ACC84720">
    <property type="protein sequence ID" value="ACC84720"/>
    <property type="gene ID" value="Npun_R6452"/>
</dbReference>
<dbReference type="KEGG" id="npu:Npun_R6452"/>
<dbReference type="eggNOG" id="COG0379">
    <property type="taxonomic scope" value="Bacteria"/>
</dbReference>
<dbReference type="HOGENOM" id="CLU_047382_0_0_3"/>
<dbReference type="OrthoDB" id="9801204at2"/>
<dbReference type="PhylomeDB" id="B2IYC1"/>
<dbReference type="UniPathway" id="UPA00253">
    <property type="reaction ID" value="UER00327"/>
</dbReference>
<dbReference type="Proteomes" id="UP000001191">
    <property type="component" value="Chromosome"/>
</dbReference>
<dbReference type="GO" id="GO:0005829">
    <property type="term" value="C:cytosol"/>
    <property type="evidence" value="ECO:0007669"/>
    <property type="project" value="TreeGrafter"/>
</dbReference>
<dbReference type="GO" id="GO:0051539">
    <property type="term" value="F:4 iron, 4 sulfur cluster binding"/>
    <property type="evidence" value="ECO:0007669"/>
    <property type="project" value="UniProtKB-KW"/>
</dbReference>
<dbReference type="GO" id="GO:0046872">
    <property type="term" value="F:metal ion binding"/>
    <property type="evidence" value="ECO:0007669"/>
    <property type="project" value="UniProtKB-KW"/>
</dbReference>
<dbReference type="GO" id="GO:0008987">
    <property type="term" value="F:quinolinate synthetase A activity"/>
    <property type="evidence" value="ECO:0007669"/>
    <property type="project" value="UniProtKB-UniRule"/>
</dbReference>
<dbReference type="GO" id="GO:0034628">
    <property type="term" value="P:'de novo' NAD biosynthetic process from L-aspartate"/>
    <property type="evidence" value="ECO:0007669"/>
    <property type="project" value="TreeGrafter"/>
</dbReference>
<dbReference type="FunFam" id="3.40.50.10800:FF:000003">
    <property type="entry name" value="Quinolinate synthase A"/>
    <property type="match status" value="1"/>
</dbReference>
<dbReference type="Gene3D" id="3.40.50.10800">
    <property type="entry name" value="NadA-like"/>
    <property type="match status" value="3"/>
</dbReference>
<dbReference type="HAMAP" id="MF_00568">
    <property type="entry name" value="NadA_type2"/>
    <property type="match status" value="1"/>
</dbReference>
<dbReference type="InterPro" id="IPR003473">
    <property type="entry name" value="NadA"/>
</dbReference>
<dbReference type="InterPro" id="IPR036094">
    <property type="entry name" value="NadA_sf"/>
</dbReference>
<dbReference type="InterPro" id="IPR023066">
    <property type="entry name" value="Quinolinate_synth_type2"/>
</dbReference>
<dbReference type="NCBIfam" id="TIGR00550">
    <property type="entry name" value="nadA"/>
    <property type="match status" value="1"/>
</dbReference>
<dbReference type="NCBIfam" id="NF006878">
    <property type="entry name" value="PRK09375.1-2"/>
    <property type="match status" value="1"/>
</dbReference>
<dbReference type="PANTHER" id="PTHR30573:SF0">
    <property type="entry name" value="QUINOLINATE SYNTHASE, CHLOROPLASTIC"/>
    <property type="match status" value="1"/>
</dbReference>
<dbReference type="PANTHER" id="PTHR30573">
    <property type="entry name" value="QUINOLINATE SYNTHETASE A"/>
    <property type="match status" value="1"/>
</dbReference>
<dbReference type="Pfam" id="PF02445">
    <property type="entry name" value="NadA"/>
    <property type="match status" value="1"/>
</dbReference>
<dbReference type="SUPFAM" id="SSF142754">
    <property type="entry name" value="NadA-like"/>
    <property type="match status" value="1"/>
</dbReference>
<reference key="1">
    <citation type="journal article" date="2013" name="Plant Physiol.">
        <title>A Nostoc punctiforme Sugar Transporter Necessary to Establish a Cyanobacterium-Plant Symbiosis.</title>
        <authorList>
            <person name="Ekman M."/>
            <person name="Picossi S."/>
            <person name="Campbell E.L."/>
            <person name="Meeks J.C."/>
            <person name="Flores E."/>
        </authorList>
    </citation>
    <scope>NUCLEOTIDE SEQUENCE [LARGE SCALE GENOMIC DNA]</scope>
    <source>
        <strain>ATCC 29133 / PCC 73102</strain>
    </source>
</reference>
<organism>
    <name type="scientific">Nostoc punctiforme (strain ATCC 29133 / PCC 73102)</name>
    <dbReference type="NCBI Taxonomy" id="63737"/>
    <lineage>
        <taxon>Bacteria</taxon>
        <taxon>Bacillati</taxon>
        <taxon>Cyanobacteriota</taxon>
        <taxon>Cyanophyceae</taxon>
        <taxon>Nostocales</taxon>
        <taxon>Nostocaceae</taxon>
        <taxon>Nostoc</taxon>
    </lineage>
</organism>
<protein>
    <recommendedName>
        <fullName evidence="1">Quinolinate synthase</fullName>
        <ecNumber evidence="1">2.5.1.72</ecNumber>
    </recommendedName>
</protein>
<gene>
    <name evidence="1" type="primary">nadA</name>
    <name type="ordered locus">Npun_R6452</name>
</gene>
<evidence type="ECO:0000255" key="1">
    <source>
        <dbReference type="HAMAP-Rule" id="MF_00568"/>
    </source>
</evidence>
<feature type="chain" id="PRO_1000129439" description="Quinolinate synthase">
    <location>
        <begin position="1"/>
        <end position="324"/>
    </location>
</feature>
<feature type="binding site" evidence="1">
    <location>
        <position position="39"/>
    </location>
    <ligand>
        <name>iminosuccinate</name>
        <dbReference type="ChEBI" id="CHEBI:77875"/>
    </ligand>
</feature>
<feature type="binding site" evidence="1">
    <location>
        <position position="56"/>
    </location>
    <ligand>
        <name>iminosuccinate</name>
        <dbReference type="ChEBI" id="CHEBI:77875"/>
    </ligand>
</feature>
<feature type="binding site" evidence="1">
    <location>
        <position position="101"/>
    </location>
    <ligand>
        <name>[4Fe-4S] cluster</name>
        <dbReference type="ChEBI" id="CHEBI:49883"/>
    </ligand>
</feature>
<feature type="binding site" evidence="1">
    <location>
        <begin position="127"/>
        <end position="129"/>
    </location>
    <ligand>
        <name>iminosuccinate</name>
        <dbReference type="ChEBI" id="CHEBI:77875"/>
    </ligand>
</feature>
<feature type="binding site" evidence="1">
    <location>
        <position position="144"/>
    </location>
    <ligand>
        <name>iminosuccinate</name>
        <dbReference type="ChEBI" id="CHEBI:77875"/>
    </ligand>
</feature>
<feature type="binding site" evidence="1">
    <location>
        <position position="187"/>
    </location>
    <ligand>
        <name>[4Fe-4S] cluster</name>
        <dbReference type="ChEBI" id="CHEBI:49883"/>
    </ligand>
</feature>
<feature type="binding site" evidence="1">
    <location>
        <begin position="213"/>
        <end position="215"/>
    </location>
    <ligand>
        <name>iminosuccinate</name>
        <dbReference type="ChEBI" id="CHEBI:77875"/>
    </ligand>
</feature>
<feature type="binding site" evidence="1">
    <location>
        <position position="230"/>
    </location>
    <ligand>
        <name>iminosuccinate</name>
        <dbReference type="ChEBI" id="CHEBI:77875"/>
    </ligand>
</feature>
<feature type="binding site" evidence="1">
    <location>
        <position position="280"/>
    </location>
    <ligand>
        <name>[4Fe-4S] cluster</name>
        <dbReference type="ChEBI" id="CHEBI:49883"/>
    </ligand>
</feature>
<proteinExistence type="inferred from homology"/>